<evidence type="ECO:0000255" key="1">
    <source>
        <dbReference type="HAMAP-Rule" id="MF_00015"/>
    </source>
</evidence>
<sequence>MKDLTAKQRSVLIFIEEFIEKNGYPPSVREIARRFRITPRGAQLHLVALEKKGYIERKNGKPRAMRVTKSVKNRVPLIGEIRAGEKKEAIEYLEDYIEVPGSFLSSGYEHFLLRVKGESMIEEHICDGDLVLIRRQDWAQNGDIVAAMVEGEVTLKKFFQRGEMVELRPANKEMSPMFFRADRVKILGKVVGVFRKYEGGRTCFLTR</sequence>
<organism>
    <name type="scientific">Thermotoga neapolitana (strain ATCC 49049 / DSM 4359 / NBRC 107923 / NS-E)</name>
    <dbReference type="NCBI Taxonomy" id="309803"/>
    <lineage>
        <taxon>Bacteria</taxon>
        <taxon>Thermotogati</taxon>
        <taxon>Thermotogota</taxon>
        <taxon>Thermotogae</taxon>
        <taxon>Thermotogales</taxon>
        <taxon>Thermotogaceae</taxon>
        <taxon>Thermotoga</taxon>
    </lineage>
</organism>
<feature type="chain" id="PRO_1000192780" description="LexA repressor">
    <location>
        <begin position="1"/>
        <end position="207"/>
    </location>
</feature>
<feature type="DNA-binding region" description="H-T-H motif" evidence="1">
    <location>
        <begin position="28"/>
        <end position="47"/>
    </location>
</feature>
<feature type="active site" description="For autocatalytic cleavage activity" evidence="1">
    <location>
        <position position="119"/>
    </location>
</feature>
<feature type="active site" description="For autocatalytic cleavage activity" evidence="1">
    <location>
        <position position="156"/>
    </location>
</feature>
<feature type="site" description="Cleavage; by autolysis" evidence="1">
    <location>
        <begin position="83"/>
        <end position="84"/>
    </location>
</feature>
<reference key="1">
    <citation type="submission" date="2007-11" db="EMBL/GenBank/DDBJ databases">
        <title>The genome sequence of the hyperthermophilic bacterium Thermotoga neapolitana.</title>
        <authorList>
            <person name="Lim S.K."/>
            <person name="Kim J.S."/>
            <person name="Cha S.H."/>
            <person name="Park B.C."/>
            <person name="Lee D.S."/>
            <person name="Tae H.S."/>
            <person name="Kim S.-J."/>
            <person name="Kim J.J."/>
            <person name="Park K.J."/>
            <person name="Lee S.Y."/>
        </authorList>
    </citation>
    <scope>NUCLEOTIDE SEQUENCE [LARGE SCALE GENOMIC DNA]</scope>
    <source>
        <strain>ATCC 49049 / DSM 4359 / NBRC 107923 / NS-E</strain>
    </source>
</reference>
<gene>
    <name evidence="1" type="primary">lexA</name>
    <name type="ordered locus">CTN_1487</name>
</gene>
<dbReference type="EC" id="3.4.21.88" evidence="1"/>
<dbReference type="EMBL" id="CP000916">
    <property type="protein sequence ID" value="ACM23663.1"/>
    <property type="molecule type" value="Genomic_DNA"/>
</dbReference>
<dbReference type="RefSeq" id="WP_015919952.1">
    <property type="nucleotide sequence ID" value="NC_011978.1"/>
</dbReference>
<dbReference type="SMR" id="B9K9N0"/>
<dbReference type="STRING" id="309803.CTN_1487"/>
<dbReference type="MEROPS" id="S24.001"/>
<dbReference type="KEGG" id="tna:CTN_1487"/>
<dbReference type="eggNOG" id="COG1974">
    <property type="taxonomic scope" value="Bacteria"/>
</dbReference>
<dbReference type="HOGENOM" id="CLU_066192_45_1_0"/>
<dbReference type="Proteomes" id="UP000000445">
    <property type="component" value="Chromosome"/>
</dbReference>
<dbReference type="GO" id="GO:0003677">
    <property type="term" value="F:DNA binding"/>
    <property type="evidence" value="ECO:0007669"/>
    <property type="project" value="UniProtKB-UniRule"/>
</dbReference>
<dbReference type="GO" id="GO:0004252">
    <property type="term" value="F:serine-type endopeptidase activity"/>
    <property type="evidence" value="ECO:0007669"/>
    <property type="project" value="UniProtKB-UniRule"/>
</dbReference>
<dbReference type="GO" id="GO:0006281">
    <property type="term" value="P:DNA repair"/>
    <property type="evidence" value="ECO:0007669"/>
    <property type="project" value="UniProtKB-UniRule"/>
</dbReference>
<dbReference type="GO" id="GO:0006260">
    <property type="term" value="P:DNA replication"/>
    <property type="evidence" value="ECO:0007669"/>
    <property type="project" value="UniProtKB-UniRule"/>
</dbReference>
<dbReference type="GO" id="GO:0045892">
    <property type="term" value="P:negative regulation of DNA-templated transcription"/>
    <property type="evidence" value="ECO:0007669"/>
    <property type="project" value="UniProtKB-UniRule"/>
</dbReference>
<dbReference type="GO" id="GO:0006508">
    <property type="term" value="P:proteolysis"/>
    <property type="evidence" value="ECO:0007669"/>
    <property type="project" value="InterPro"/>
</dbReference>
<dbReference type="GO" id="GO:0009432">
    <property type="term" value="P:SOS response"/>
    <property type="evidence" value="ECO:0007669"/>
    <property type="project" value="UniProtKB-UniRule"/>
</dbReference>
<dbReference type="CDD" id="cd06529">
    <property type="entry name" value="S24_LexA-like"/>
    <property type="match status" value="1"/>
</dbReference>
<dbReference type="FunFam" id="1.10.10.10:FF:000009">
    <property type="entry name" value="LexA repressor"/>
    <property type="match status" value="1"/>
</dbReference>
<dbReference type="FunFam" id="2.10.109.10:FF:000001">
    <property type="entry name" value="LexA repressor"/>
    <property type="match status" value="1"/>
</dbReference>
<dbReference type="Gene3D" id="2.10.109.10">
    <property type="entry name" value="Umud Fragment, subunit A"/>
    <property type="match status" value="1"/>
</dbReference>
<dbReference type="Gene3D" id="1.10.10.10">
    <property type="entry name" value="Winged helix-like DNA-binding domain superfamily/Winged helix DNA-binding domain"/>
    <property type="match status" value="1"/>
</dbReference>
<dbReference type="HAMAP" id="MF_00015">
    <property type="entry name" value="LexA"/>
    <property type="match status" value="1"/>
</dbReference>
<dbReference type="InterPro" id="IPR006200">
    <property type="entry name" value="LexA"/>
</dbReference>
<dbReference type="InterPro" id="IPR039418">
    <property type="entry name" value="LexA-like"/>
</dbReference>
<dbReference type="InterPro" id="IPR036286">
    <property type="entry name" value="LexA/Signal_pep-like_sf"/>
</dbReference>
<dbReference type="InterPro" id="IPR006199">
    <property type="entry name" value="LexA_DNA-bd_dom"/>
</dbReference>
<dbReference type="InterPro" id="IPR050077">
    <property type="entry name" value="LexA_repressor"/>
</dbReference>
<dbReference type="InterPro" id="IPR006197">
    <property type="entry name" value="Peptidase_S24_LexA"/>
</dbReference>
<dbReference type="InterPro" id="IPR015927">
    <property type="entry name" value="Peptidase_S24_S26A/B/C"/>
</dbReference>
<dbReference type="InterPro" id="IPR036388">
    <property type="entry name" value="WH-like_DNA-bd_sf"/>
</dbReference>
<dbReference type="InterPro" id="IPR036390">
    <property type="entry name" value="WH_DNA-bd_sf"/>
</dbReference>
<dbReference type="NCBIfam" id="TIGR00498">
    <property type="entry name" value="lexA"/>
    <property type="match status" value="1"/>
</dbReference>
<dbReference type="PANTHER" id="PTHR33516">
    <property type="entry name" value="LEXA REPRESSOR"/>
    <property type="match status" value="1"/>
</dbReference>
<dbReference type="PANTHER" id="PTHR33516:SF2">
    <property type="entry name" value="LEXA REPRESSOR-RELATED"/>
    <property type="match status" value="1"/>
</dbReference>
<dbReference type="Pfam" id="PF01726">
    <property type="entry name" value="LexA_DNA_bind"/>
    <property type="match status" value="1"/>
</dbReference>
<dbReference type="Pfam" id="PF00717">
    <property type="entry name" value="Peptidase_S24"/>
    <property type="match status" value="1"/>
</dbReference>
<dbReference type="PRINTS" id="PR00726">
    <property type="entry name" value="LEXASERPTASE"/>
</dbReference>
<dbReference type="SUPFAM" id="SSF51306">
    <property type="entry name" value="LexA/Signal peptidase"/>
    <property type="match status" value="1"/>
</dbReference>
<dbReference type="SUPFAM" id="SSF46785">
    <property type="entry name" value="Winged helix' DNA-binding domain"/>
    <property type="match status" value="1"/>
</dbReference>
<keyword id="KW-0068">Autocatalytic cleavage</keyword>
<keyword id="KW-0227">DNA damage</keyword>
<keyword id="KW-0234">DNA repair</keyword>
<keyword id="KW-0235">DNA replication</keyword>
<keyword id="KW-0238">DNA-binding</keyword>
<keyword id="KW-0378">Hydrolase</keyword>
<keyword id="KW-0678">Repressor</keyword>
<keyword id="KW-0742">SOS response</keyword>
<keyword id="KW-0804">Transcription</keyword>
<keyword id="KW-0805">Transcription regulation</keyword>
<protein>
    <recommendedName>
        <fullName evidence="1">LexA repressor</fullName>
        <ecNumber evidence="1">3.4.21.88</ecNumber>
    </recommendedName>
</protein>
<proteinExistence type="inferred from homology"/>
<name>LEXA_THENN</name>
<comment type="function">
    <text evidence="1">Represses a number of genes involved in the response to DNA damage (SOS response), including recA and lexA. In the presence of single-stranded DNA, RecA interacts with LexA causing an autocatalytic cleavage which disrupts the DNA-binding part of LexA, leading to derepression of the SOS regulon and eventually DNA repair.</text>
</comment>
<comment type="catalytic activity">
    <reaction evidence="1">
        <text>Hydrolysis of Ala-|-Gly bond in repressor LexA.</text>
        <dbReference type="EC" id="3.4.21.88"/>
    </reaction>
</comment>
<comment type="subunit">
    <text evidence="1">Homodimer.</text>
</comment>
<comment type="similarity">
    <text evidence="1">Belongs to the peptidase S24 family.</text>
</comment>
<accession>B9K9N0</accession>